<organism>
    <name type="scientific">Dictyostelium purpureum</name>
    <name type="common">Slime mold</name>
    <dbReference type="NCBI Taxonomy" id="5786"/>
    <lineage>
        <taxon>Eukaryota</taxon>
        <taxon>Amoebozoa</taxon>
        <taxon>Evosea</taxon>
        <taxon>Eumycetozoa</taxon>
        <taxon>Dictyostelia</taxon>
        <taxon>Dictyosteliales</taxon>
        <taxon>Dictyosteliaceae</taxon>
        <taxon>Dictyostelium</taxon>
    </lineage>
</organism>
<protein>
    <recommendedName>
        <fullName evidence="4">Terpene synthase 6</fullName>
        <ecNumber evidence="3">4.2.3.-</ecNumber>
        <ecNumber evidence="3">4.2.3.46</ecNumber>
        <ecNumber evidence="3">4.2.3.47</ecNumber>
    </recommendedName>
</protein>
<comment type="function">
    <text evidence="3">Terpene synthase that converts its substrate farnesyl diphosphate (FPP) into the sesquiterpenes beta-elemene, (E)-beta-farnesene and (E,E)-alpha-farnesene.</text>
</comment>
<comment type="catalytic activity">
    <reaction evidence="3">
        <text>(2E,6E)-farnesyl diphosphate = (E)-beta-farnesene + diphosphate</text>
        <dbReference type="Rhea" id="RHEA:27425"/>
        <dbReference type="ChEBI" id="CHEBI:10418"/>
        <dbReference type="ChEBI" id="CHEBI:33019"/>
        <dbReference type="ChEBI" id="CHEBI:175763"/>
        <dbReference type="EC" id="4.2.3.47"/>
    </reaction>
    <physiologicalReaction direction="left-to-right" evidence="3">
        <dbReference type="Rhea" id="RHEA:27426"/>
    </physiologicalReaction>
</comment>
<comment type="catalytic activity">
    <reaction evidence="3">
        <text>(2E,6E)-farnesyl diphosphate = (1S,2S,4R)-beta-elemene + diphosphate</text>
        <dbReference type="Rhea" id="RHEA:68712"/>
        <dbReference type="ChEBI" id="CHEBI:33019"/>
        <dbReference type="ChEBI" id="CHEBI:62855"/>
        <dbReference type="ChEBI" id="CHEBI:175763"/>
    </reaction>
    <physiologicalReaction direction="left-to-right" evidence="3">
        <dbReference type="Rhea" id="RHEA:68713"/>
    </physiologicalReaction>
</comment>
<comment type="catalytic activity">
    <reaction evidence="3">
        <text>(2E,6E)-farnesyl diphosphate = (3E,6E)-alpha-farnesene + diphosphate</text>
        <dbReference type="Rhea" id="RHEA:27421"/>
        <dbReference type="ChEBI" id="CHEBI:10280"/>
        <dbReference type="ChEBI" id="CHEBI:33019"/>
        <dbReference type="ChEBI" id="CHEBI:175763"/>
        <dbReference type="EC" id="4.2.3.46"/>
    </reaction>
    <physiologicalReaction direction="left-to-right" evidence="3">
        <dbReference type="Rhea" id="RHEA:27422"/>
    </physiologicalReaction>
</comment>
<comment type="domain">
    <text evidence="2">Contains several highly conserved motifs that are important for catalytic activity including the aspartate-rich 'DDxx(x)D/E' motif and the 'NDxxSxxxD/E' motif, both of which are involved in complexing metal ions to coordinate the binding of the isoprenyl diphosphate substrate in the active site.</text>
</comment>
<comment type="similarity">
    <text evidence="5">Belongs to the terpene synthase family.</text>
</comment>
<keyword id="KW-0456">Lyase</keyword>
<keyword id="KW-0479">Metal-binding</keyword>
<keyword id="KW-1185">Reference proteome</keyword>
<proteinExistence type="evidence at protein level"/>
<accession>F0ZDD0</accession>
<name>TPS6_DICPU</name>
<evidence type="ECO:0000250" key="1">
    <source>
        <dbReference type="UniProtKB" id="Q54BE5"/>
    </source>
</evidence>
<evidence type="ECO:0000250" key="2">
    <source>
        <dbReference type="UniProtKB" id="Q55E23"/>
    </source>
</evidence>
<evidence type="ECO:0000269" key="3">
    <source>
    </source>
</evidence>
<evidence type="ECO:0000303" key="4">
    <source>
    </source>
</evidence>
<evidence type="ECO:0000305" key="5"/>
<gene>
    <name evidence="4" type="primary">TPS6</name>
    <name type="ORF">DICPUDRAFT_29342</name>
</gene>
<dbReference type="EC" id="4.2.3.-" evidence="3"/>
<dbReference type="EC" id="4.2.3.46" evidence="3"/>
<dbReference type="EC" id="4.2.3.47" evidence="3"/>
<dbReference type="EMBL" id="MG262467">
    <property type="protein sequence ID" value="AXN72975.1"/>
    <property type="molecule type" value="mRNA"/>
</dbReference>
<dbReference type="EMBL" id="GL870985">
    <property type="protein sequence ID" value="EGC38021.1"/>
    <property type="molecule type" value="Genomic_DNA"/>
</dbReference>
<dbReference type="RefSeq" id="XP_003285422.1">
    <property type="nucleotide sequence ID" value="XM_003285374.1"/>
</dbReference>
<dbReference type="SMR" id="F0ZDD0"/>
<dbReference type="STRING" id="5786.F0ZDD0"/>
<dbReference type="EnsemblProtists" id="EGC38021">
    <property type="protein sequence ID" value="EGC38021"/>
    <property type="gene ID" value="DICPUDRAFT_29342"/>
</dbReference>
<dbReference type="GeneID" id="10502866"/>
<dbReference type="KEGG" id="dpp:DICPUDRAFT_29342"/>
<dbReference type="VEuPathDB" id="AmoebaDB:DICPUDRAFT_29342"/>
<dbReference type="eggNOG" id="ENOG502RHRK">
    <property type="taxonomic scope" value="Eukaryota"/>
</dbReference>
<dbReference type="InParanoid" id="F0ZDD0"/>
<dbReference type="OMA" id="ACAMISH"/>
<dbReference type="OrthoDB" id="2861623at2759"/>
<dbReference type="Proteomes" id="UP000001064">
    <property type="component" value="Unassembled WGS sequence"/>
</dbReference>
<dbReference type="GO" id="GO:0046872">
    <property type="term" value="F:metal ion binding"/>
    <property type="evidence" value="ECO:0007669"/>
    <property type="project" value="UniProtKB-KW"/>
</dbReference>
<dbReference type="GO" id="GO:0010333">
    <property type="term" value="F:terpene synthase activity"/>
    <property type="evidence" value="ECO:0007669"/>
    <property type="project" value="InterPro"/>
</dbReference>
<dbReference type="GO" id="GO:0046246">
    <property type="term" value="P:terpene biosynthetic process"/>
    <property type="evidence" value="ECO:0007669"/>
    <property type="project" value="UniProtKB-ARBA"/>
</dbReference>
<dbReference type="Gene3D" id="1.10.600.10">
    <property type="entry name" value="Farnesyl Diphosphate Synthase"/>
    <property type="match status" value="1"/>
</dbReference>
<dbReference type="InterPro" id="IPR008949">
    <property type="entry name" value="Isoprenoid_synthase_dom_sf"/>
</dbReference>
<dbReference type="InterPro" id="IPR034686">
    <property type="entry name" value="Terpene_cyclase-like_2"/>
</dbReference>
<dbReference type="PANTHER" id="PTHR35201:SF4">
    <property type="entry name" value="BETA-PINACENE SYNTHASE-RELATED"/>
    <property type="match status" value="1"/>
</dbReference>
<dbReference type="PANTHER" id="PTHR35201">
    <property type="entry name" value="TERPENE SYNTHASE"/>
    <property type="match status" value="1"/>
</dbReference>
<dbReference type="Pfam" id="PF19086">
    <property type="entry name" value="Terpene_syn_C_2"/>
    <property type="match status" value="1"/>
</dbReference>
<dbReference type="SUPFAM" id="SSF48576">
    <property type="entry name" value="Terpenoid synthases"/>
    <property type="match status" value="1"/>
</dbReference>
<sequence>MKQHILWDLNNYINQDYTLPKINCTFDIKTNINSSVKEDQEKWILEFFGNSIEKSKKYLGQQTFLIYMFSFPFASPDELKCIFKIMDWAFIIDDFYFESKAKGMSYLEKLFKTNKDKSKDKFIKLFWEIINEYKQIGKKDSIDVLINEIYSWAKSAVQCSKNDQISSNSTLAEYMESRYYDIGIIMALASSTTLISIPKEIRESKIFKQLEYWFVVCNTLINDCYSFNKEKNEPVLTNYVKIKTLQCGSIQTSLDFVAETIENSLTEINNHSNQLIQQYPNNINLKQYIKSLKYLTSGHLHVSSICNRYK</sequence>
<reference key="1">
    <citation type="journal article" date="2018" name="Sci. Rep.">
        <title>Diversity and Functional Evolution of Terpene Synthases in Dictyostelid Social Amoebae.</title>
        <authorList>
            <person name="Chen X."/>
            <person name="Kollner T.G."/>
            <person name="Shaulsky G."/>
            <person name="Jia Q."/>
            <person name="Dickschat J.S."/>
            <person name="Gershenzon J."/>
            <person name="Chen F."/>
        </authorList>
    </citation>
    <scope>NUCLEOTIDE SEQUENCE [MRNA]</scope>
    <scope>FUNCTION</scope>
    <scope>CATALYTIC ACTIVITY</scope>
    <source>
        <strain>AX1</strain>
    </source>
</reference>
<reference key="2">
    <citation type="journal article" date="2011" name="Genome Biol.">
        <title>Comparative genomics of the social amoebae Dictyostelium discoideum and Dictyostelium purpureum.</title>
        <authorList>
            <consortium name="US DOE Joint Genome Institute (JGI-PGF)"/>
            <person name="Sucgang R."/>
            <person name="Kuo A."/>
            <person name="Tian X."/>
            <person name="Salerno W."/>
            <person name="Parikh A."/>
            <person name="Feasley C.L."/>
            <person name="Dalin E."/>
            <person name="Tu H."/>
            <person name="Huang E."/>
            <person name="Barry K."/>
            <person name="Lindquist E."/>
            <person name="Shapiro H."/>
            <person name="Bruce D."/>
            <person name="Schmutz J."/>
            <person name="Salamov A."/>
            <person name="Fey P."/>
            <person name="Gaudet P."/>
            <person name="Anjard C."/>
            <person name="Babu M.M."/>
            <person name="Basu S."/>
            <person name="Bushmanova Y."/>
            <person name="van der Wel H."/>
            <person name="Katoh-Kurasawa M."/>
            <person name="Dinh C."/>
            <person name="Coutinho P.M."/>
            <person name="Saito T."/>
            <person name="Elias M."/>
            <person name="Schaap P."/>
            <person name="Kay R.R."/>
            <person name="Henrissat B."/>
            <person name="Eichinger L."/>
            <person name="Rivero F."/>
            <person name="Putnam N.H."/>
            <person name="West C.M."/>
            <person name="Loomis W.F."/>
            <person name="Chisholm R.L."/>
            <person name="Shaulsky G."/>
            <person name="Strassmann J.E."/>
            <person name="Queller D.C."/>
            <person name="Kuspa A."/>
            <person name="Grigoriev I.V."/>
        </authorList>
    </citation>
    <scope>NUCLEOTIDE SEQUENCE [LARGE SCALE GENOMIC DNA]</scope>
    <source>
        <strain>QSDP1</strain>
    </source>
</reference>
<feature type="chain" id="PRO_0000457023" description="Terpene synthase 6">
    <location>
        <begin position="1"/>
        <end position="310"/>
    </location>
</feature>
<feature type="short sequence motif" description="DDxx(x)D/E motif" evidence="1">
    <location>
        <begin position="93"/>
        <end position="98"/>
    </location>
</feature>
<feature type="short sequence motif" description="NDxxSxxxD/E motif" evidence="1">
    <location>
        <begin position="222"/>
        <end position="230"/>
    </location>
</feature>